<reference key="1">
    <citation type="journal article" date="1992" name="Nucleic Acids Res.">
        <title>Systematic sequencing of the Escherichia coli genome: analysis of the 0-2.4 min region.</title>
        <authorList>
            <person name="Yura T."/>
            <person name="Mori H."/>
            <person name="Nagai H."/>
            <person name="Nagata T."/>
            <person name="Ishihama A."/>
            <person name="Fujita N."/>
            <person name="Isono K."/>
            <person name="Mizobuchi K."/>
            <person name="Nakata A."/>
        </authorList>
    </citation>
    <scope>NUCLEOTIDE SEQUENCE [LARGE SCALE GENOMIC DNA]</scope>
    <source>
        <strain>K12</strain>
    </source>
</reference>
<reference key="2">
    <citation type="journal article" date="1997" name="Science">
        <title>The complete genome sequence of Escherichia coli K-12.</title>
        <authorList>
            <person name="Blattner F.R."/>
            <person name="Plunkett G. III"/>
            <person name="Bloch C.A."/>
            <person name="Perna N.T."/>
            <person name="Burland V."/>
            <person name="Riley M."/>
            <person name="Collado-Vides J."/>
            <person name="Glasner J.D."/>
            <person name="Rode C.K."/>
            <person name="Mayhew G.F."/>
            <person name="Gregor J."/>
            <person name="Davis N.W."/>
            <person name="Kirkpatrick H.A."/>
            <person name="Goeden M.A."/>
            <person name="Rose D.J."/>
            <person name="Mau B."/>
            <person name="Shao Y."/>
        </authorList>
    </citation>
    <scope>NUCLEOTIDE SEQUENCE [LARGE SCALE GENOMIC DNA]</scope>
    <source>
        <strain>K12 / MG1655 / ATCC 47076</strain>
    </source>
</reference>
<reference key="3">
    <citation type="journal article" date="2006" name="Mol. Syst. Biol.">
        <title>Highly accurate genome sequences of Escherichia coli K-12 strains MG1655 and W3110.</title>
        <authorList>
            <person name="Hayashi K."/>
            <person name="Morooka N."/>
            <person name="Yamamoto Y."/>
            <person name="Fujita K."/>
            <person name="Isono K."/>
            <person name="Choi S."/>
            <person name="Ohtsubo E."/>
            <person name="Baba T."/>
            <person name="Wanner B.L."/>
            <person name="Mori H."/>
            <person name="Horiuchi T."/>
        </authorList>
    </citation>
    <scope>NUCLEOTIDE SEQUENCE [LARGE SCALE GENOMIC DNA]</scope>
    <scope>SEQUENCE REVISION</scope>
    <source>
        <strain>K12 / W3110 / ATCC 27325 / DSM 5911</strain>
    </source>
</reference>
<keyword id="KW-0997">Cell inner membrane</keyword>
<keyword id="KW-1003">Cell membrane</keyword>
<keyword id="KW-0472">Membrane</keyword>
<keyword id="KW-1185">Reference proteome</keyword>
<keyword id="KW-0812">Transmembrane</keyword>
<keyword id="KW-1133">Transmembrane helix</keyword>
<keyword id="KW-0813">Transport</keyword>
<feature type="chain" id="PRO_0000050481" description="Putative metabolite transport protein YaaU">
    <location>
        <begin position="1"/>
        <end position="443"/>
    </location>
</feature>
<feature type="topological domain" description="Cytoplasmic" evidence="1">
    <location>
        <begin position="1"/>
        <end position="18"/>
    </location>
</feature>
<feature type="transmembrane region" description="Helical; Name=1" evidence="1">
    <location>
        <begin position="19"/>
        <end position="39"/>
    </location>
</feature>
<feature type="topological domain" description="Periplasmic" evidence="1">
    <location>
        <begin position="40"/>
        <end position="53"/>
    </location>
</feature>
<feature type="transmembrane region" description="Helical; Name=2" evidence="1">
    <location>
        <begin position="54"/>
        <end position="74"/>
    </location>
</feature>
<feature type="topological domain" description="Cytoplasmic" evidence="1">
    <location>
        <begin position="75"/>
        <end position="84"/>
    </location>
</feature>
<feature type="transmembrane region" description="Helical; Name=3" evidence="1">
    <location>
        <begin position="85"/>
        <end position="105"/>
    </location>
</feature>
<feature type="topological domain" description="Periplasmic" evidence="1">
    <location>
        <begin position="106"/>
        <end position="113"/>
    </location>
</feature>
<feature type="transmembrane region" description="Helical; Name=4" evidence="1">
    <location>
        <begin position="114"/>
        <end position="134"/>
    </location>
</feature>
<feature type="topological domain" description="Cytoplasmic" evidence="1">
    <location>
        <begin position="135"/>
        <end position="145"/>
    </location>
</feature>
<feature type="transmembrane region" description="Helical; Name=5" evidence="1">
    <location>
        <begin position="146"/>
        <end position="166"/>
    </location>
</feature>
<feature type="topological domain" description="Periplasmic" evidence="1">
    <location>
        <begin position="167"/>
        <end position="173"/>
    </location>
</feature>
<feature type="transmembrane region" description="Helical; Name=6" evidence="1">
    <location>
        <begin position="174"/>
        <end position="194"/>
    </location>
</feature>
<feature type="topological domain" description="Cytoplasmic" evidence="1">
    <location>
        <begin position="195"/>
        <end position="241"/>
    </location>
</feature>
<feature type="transmembrane region" description="Helical; Name=7" evidence="1">
    <location>
        <begin position="242"/>
        <end position="262"/>
    </location>
</feature>
<feature type="topological domain" description="Periplasmic" evidence="1">
    <location>
        <begin position="263"/>
        <end position="282"/>
    </location>
</feature>
<feature type="transmembrane region" description="Helical; Name=8" evidence="1">
    <location>
        <begin position="283"/>
        <end position="303"/>
    </location>
</feature>
<feature type="topological domain" description="Cytoplasmic" evidence="1">
    <location>
        <begin position="304"/>
        <end position="309"/>
    </location>
</feature>
<feature type="transmembrane region" description="Helical; Name=9" evidence="1">
    <location>
        <begin position="310"/>
        <end position="329"/>
    </location>
</feature>
<feature type="topological domain" description="Periplasmic" evidence="1">
    <location>
        <begin position="330"/>
        <end position="334"/>
    </location>
</feature>
<feature type="transmembrane region" description="Helical; Name=10" evidence="1">
    <location>
        <begin position="335"/>
        <end position="357"/>
    </location>
</feature>
<feature type="topological domain" description="Cytoplasmic" evidence="1">
    <location>
        <begin position="358"/>
        <end position="373"/>
    </location>
</feature>
<feature type="transmembrane region" description="Helical; Name=11" evidence="1">
    <location>
        <begin position="374"/>
        <end position="394"/>
    </location>
</feature>
<feature type="topological domain" description="Periplasmic" evidence="1">
    <location>
        <begin position="395"/>
        <end position="401"/>
    </location>
</feature>
<feature type="transmembrane region" description="Helical; Name=12" evidence="1">
    <location>
        <begin position="402"/>
        <end position="422"/>
    </location>
</feature>
<feature type="topological domain" description="Cytoplasmic" evidence="1">
    <location>
        <begin position="423"/>
        <end position="443"/>
    </location>
</feature>
<sequence>MQPSRNFDDLKFSSIHRRILLWGSGGPFLDGYVLVMIGVALEQLTPALKLDADWIGLLGAGTLAGLFVGTSLFGYISDKVGRRKMFLIDIIAIGVISVATMFVSSPVELLVMRVLIGIVIGADYPIATSMITEFSSTRQRAFSISFIAAMWYVGATCADLVGYWLYDVEGGWRWMLGSAAIPCLLILIGRFELPESPRWLLRKGRVKECEEMMIKLFGEPVAFDEEQPQQTRFRDLFNRRHFPFVLFVAAIWTCQVIPMFAIYTFGPQIVGLLGLGVGKNAALGNVVISLFFMLGCIPPMLWLNTAGRRPLLIGSFAMMTLALAVLGLIPDMGIWLVVMAFAVYAFFSGGPGNLQWLYPNELFPTDIRASAVGVIMSLSRIGTIVSTWALPIFINNYGISNTMLMGAGISLFGLLISVAFAPETRGMSLAQTSNMTIRGQRMG</sequence>
<protein>
    <recommendedName>
        <fullName>Putative metabolite transport protein YaaU</fullName>
    </recommendedName>
</protein>
<comment type="subcellular location">
    <subcellularLocation>
        <location evidence="2">Cell inner membrane</location>
        <topology evidence="2">Multi-pass membrane protein</topology>
    </subcellularLocation>
</comment>
<comment type="similarity">
    <text evidence="2">Belongs to the major facilitator superfamily. Sugar transporter (TC 2.A.1.1) family.</text>
</comment>
<dbReference type="EMBL" id="U00096">
    <property type="protein sequence ID" value="AAC73156.1"/>
    <property type="molecule type" value="Genomic_DNA"/>
</dbReference>
<dbReference type="EMBL" id="AP009048">
    <property type="protein sequence ID" value="BAB96613.2"/>
    <property type="molecule type" value="Genomic_DNA"/>
</dbReference>
<dbReference type="PIR" id="E64725">
    <property type="entry name" value="E64725"/>
</dbReference>
<dbReference type="RefSeq" id="NP_414587.1">
    <property type="nucleotide sequence ID" value="NC_000913.3"/>
</dbReference>
<dbReference type="RefSeq" id="WP_001183198.1">
    <property type="nucleotide sequence ID" value="NZ_STEB01000010.1"/>
</dbReference>
<dbReference type="SMR" id="P31679"/>
<dbReference type="BioGRID" id="4262202">
    <property type="interactions" value="181"/>
</dbReference>
<dbReference type="FunCoup" id="P31679">
    <property type="interactions" value="434"/>
</dbReference>
<dbReference type="STRING" id="511145.b0045"/>
<dbReference type="TCDB" id="2.A.1.1.114">
    <property type="family name" value="the major facilitator superfamily (mfs)"/>
</dbReference>
<dbReference type="PaxDb" id="511145-b0045"/>
<dbReference type="EnsemblBacteria" id="AAC73156">
    <property type="protein sequence ID" value="AAC73156"/>
    <property type="gene ID" value="b0045"/>
</dbReference>
<dbReference type="GeneID" id="944766"/>
<dbReference type="KEGG" id="ecj:JW0044"/>
<dbReference type="KEGG" id="eco:b0045"/>
<dbReference type="KEGG" id="ecoc:C3026_00235"/>
<dbReference type="PATRIC" id="fig|1411691.4.peg.2238"/>
<dbReference type="EchoBASE" id="EB1527"/>
<dbReference type="eggNOG" id="COG2271">
    <property type="taxonomic scope" value="Bacteria"/>
</dbReference>
<dbReference type="HOGENOM" id="CLU_001265_46_6_6"/>
<dbReference type="InParanoid" id="P31679"/>
<dbReference type="OMA" id="DKMWRVV"/>
<dbReference type="OrthoDB" id="3252866at2"/>
<dbReference type="PhylomeDB" id="P31679"/>
<dbReference type="BioCyc" id="EcoCyc:YAAU-MONOMER"/>
<dbReference type="PRO" id="PR:P31679"/>
<dbReference type="Proteomes" id="UP000000625">
    <property type="component" value="Chromosome"/>
</dbReference>
<dbReference type="GO" id="GO:0005886">
    <property type="term" value="C:plasma membrane"/>
    <property type="evidence" value="ECO:0000314"/>
    <property type="project" value="EcoCyc"/>
</dbReference>
<dbReference type="GO" id="GO:0022857">
    <property type="term" value="F:transmembrane transporter activity"/>
    <property type="evidence" value="ECO:0007669"/>
    <property type="project" value="InterPro"/>
</dbReference>
<dbReference type="GO" id="GO:0006979">
    <property type="term" value="P:response to oxidative stress"/>
    <property type="evidence" value="ECO:0000315"/>
    <property type="project" value="EcoCyc"/>
</dbReference>
<dbReference type="CDD" id="cd17316">
    <property type="entry name" value="MFS_SV2_like"/>
    <property type="match status" value="1"/>
</dbReference>
<dbReference type="FunFam" id="1.20.1250.20:FF:000096">
    <property type="entry name" value="Major facilitator family transporter"/>
    <property type="match status" value="1"/>
</dbReference>
<dbReference type="Gene3D" id="1.20.1250.20">
    <property type="entry name" value="MFS general substrate transporter like domains"/>
    <property type="match status" value="1"/>
</dbReference>
<dbReference type="InterPro" id="IPR020846">
    <property type="entry name" value="MFS_dom"/>
</dbReference>
<dbReference type="InterPro" id="IPR005828">
    <property type="entry name" value="MFS_sugar_transport-like"/>
</dbReference>
<dbReference type="InterPro" id="IPR036259">
    <property type="entry name" value="MFS_trans_sf"/>
</dbReference>
<dbReference type="PANTHER" id="PTHR23511:SF14">
    <property type="entry name" value="METABOLITE TRANSPORT PROTEIN YAAU-RELATED"/>
    <property type="match status" value="1"/>
</dbReference>
<dbReference type="PANTHER" id="PTHR23511">
    <property type="entry name" value="SYNAPTIC VESICLE GLYCOPROTEIN 2"/>
    <property type="match status" value="1"/>
</dbReference>
<dbReference type="Pfam" id="PF00083">
    <property type="entry name" value="Sugar_tr"/>
    <property type="match status" value="1"/>
</dbReference>
<dbReference type="SUPFAM" id="SSF103473">
    <property type="entry name" value="MFS general substrate transporter"/>
    <property type="match status" value="1"/>
</dbReference>
<dbReference type="PROSITE" id="PS50850">
    <property type="entry name" value="MFS"/>
    <property type="match status" value="1"/>
</dbReference>
<gene>
    <name type="primary">yaaU</name>
    <name type="synonym">yabE</name>
    <name type="ordered locus">b0045</name>
    <name type="ordered locus">JW0044</name>
</gene>
<organism>
    <name type="scientific">Escherichia coli (strain K12)</name>
    <dbReference type="NCBI Taxonomy" id="83333"/>
    <lineage>
        <taxon>Bacteria</taxon>
        <taxon>Pseudomonadati</taxon>
        <taxon>Pseudomonadota</taxon>
        <taxon>Gammaproteobacteria</taxon>
        <taxon>Enterobacterales</taxon>
        <taxon>Enterobacteriaceae</taxon>
        <taxon>Escherichia</taxon>
    </lineage>
</organism>
<proteinExistence type="inferred from homology"/>
<accession>P31679</accession>
<accession>P31578</accession>
<accession>P75628</accession>
<evidence type="ECO:0000255" key="1"/>
<evidence type="ECO:0000305" key="2"/>
<name>YAAU_ECOLI</name>